<name>GLUC_CORGL</name>
<gene>
    <name evidence="4" type="primary">gluC</name>
    <name type="ordered locus">Cgl1952</name>
    <name type="ordered locus">cg2138</name>
</gene>
<sequence>MSTLWADLGPSLLPAFWVTIKLTIYSAIGAMIFGTILTTMRVSPVKILRTLSTAYINTVRNTPLTLVVLFCSFGLYQNLGLTLAGRESSTFLVDNNFRLAVLGFILYTSTFVAESLRSGINTVHFGQAEAARSLGLGFGATFRSIIFPQAVRAAIVPLGNTLIALTKNTTIASVIGVGEASLLMKATIENHANMLFVVFAIFAVGFMILTLPMGLGLGKLSERLAVKK</sequence>
<comment type="function">
    <text evidence="3">Part of the ABC transporter complex GluABCD involved in glutamate uptake. Probably responsible for the translocation of the substrate across the membrane.</text>
</comment>
<comment type="subunit">
    <text evidence="6">The complex is composed of two ATP-binding proteins (GluA), two transmembrane proteins (GluC and GluD) and a solute-binding protein (GluB).</text>
</comment>
<comment type="subcellular location">
    <subcellularLocation>
        <location evidence="5">Cell membrane</location>
        <topology evidence="1">Multi-pass membrane protein</topology>
    </subcellularLocation>
</comment>
<comment type="disruption phenotype">
    <text evidence="3">Deletion of the gluABCD cluster almost abolishes glutamate uptake activity.</text>
</comment>
<comment type="similarity">
    <text evidence="5">Belongs to the binding-protein-dependent transport system permease family. HisMQ subfamily.</text>
</comment>
<organism>
    <name type="scientific">Corynebacterium glutamicum (strain ATCC 13032 / DSM 20300 / JCM 1318 / BCRC 11384 / CCUG 27702 / LMG 3730 / NBRC 12168 / NCIMB 10025 / NRRL B-2784 / 534)</name>
    <dbReference type="NCBI Taxonomy" id="196627"/>
    <lineage>
        <taxon>Bacteria</taxon>
        <taxon>Bacillati</taxon>
        <taxon>Actinomycetota</taxon>
        <taxon>Actinomycetes</taxon>
        <taxon>Mycobacteriales</taxon>
        <taxon>Corynebacteriaceae</taxon>
        <taxon>Corynebacterium</taxon>
    </lineage>
</organism>
<reference key="1">
    <citation type="journal article" date="1995" name="J. Bacteriol.">
        <title>Structure of the gluABCD cluster encoding the glutamate uptake system of Corynebacterium glutamicum.</title>
        <authorList>
            <person name="Kronemeyer W."/>
            <person name="Peekhaus N."/>
            <person name="Kraemer R."/>
            <person name="Sahm H."/>
            <person name="Eggeling L."/>
        </authorList>
    </citation>
    <scope>NUCLEOTIDE SEQUENCE [GENOMIC DNA]</scope>
    <scope>FUNCTION</scope>
    <scope>SUBUNIT</scope>
    <scope>DISRUPTION PHENOTYPE</scope>
    <source>
        <strain>ATCC 13032 / DSM 20300 / JCM 1318 / BCRC 11384 / CCUG 27702 / LMG 3730 / NBRC 12168 / NCIMB 10025 / NRRL B-2784 / 534</strain>
    </source>
</reference>
<reference key="2">
    <citation type="journal article" date="2003" name="Appl. Microbiol. Biotechnol.">
        <title>The Corynebacterium glutamicum genome: features and impacts on biotechnological processes.</title>
        <authorList>
            <person name="Ikeda M."/>
            <person name="Nakagawa S."/>
        </authorList>
    </citation>
    <scope>NUCLEOTIDE SEQUENCE [LARGE SCALE GENOMIC DNA]</scope>
    <source>
        <strain>ATCC 13032 / DSM 20300 / JCM 1318 / BCRC 11384 / CCUG 27702 / LMG 3730 / NBRC 12168 / NCIMB 10025 / NRRL B-2784 / 534</strain>
    </source>
</reference>
<reference key="3">
    <citation type="journal article" date="2003" name="J. Biotechnol.">
        <title>The complete Corynebacterium glutamicum ATCC 13032 genome sequence and its impact on the production of L-aspartate-derived amino acids and vitamins.</title>
        <authorList>
            <person name="Kalinowski J."/>
            <person name="Bathe B."/>
            <person name="Bartels D."/>
            <person name="Bischoff N."/>
            <person name="Bott M."/>
            <person name="Burkovski A."/>
            <person name="Dusch N."/>
            <person name="Eggeling L."/>
            <person name="Eikmanns B.J."/>
            <person name="Gaigalat L."/>
            <person name="Goesmann A."/>
            <person name="Hartmann M."/>
            <person name="Huthmacher K."/>
            <person name="Kraemer R."/>
            <person name="Linke B."/>
            <person name="McHardy A.C."/>
            <person name="Meyer F."/>
            <person name="Moeckel B."/>
            <person name="Pfefferle W."/>
            <person name="Puehler A."/>
            <person name="Rey D.A."/>
            <person name="Rueckert C."/>
            <person name="Rupp O."/>
            <person name="Sahm H."/>
            <person name="Wendisch V.F."/>
            <person name="Wiegraebe I."/>
            <person name="Tauch A."/>
        </authorList>
    </citation>
    <scope>NUCLEOTIDE SEQUENCE [LARGE SCALE GENOMIC DNA]</scope>
    <source>
        <strain>ATCC 13032 / DSM 20300 / JCM 1318 / BCRC 11384 / CCUG 27702 / LMG 3730 / NBRC 12168 / NCIMB 10025 / NRRL B-2784 / 534</strain>
    </source>
</reference>
<proteinExistence type="evidence at protein level"/>
<keyword id="KW-0029">Amino-acid transport</keyword>
<keyword id="KW-1003">Cell membrane</keyword>
<keyword id="KW-0472">Membrane</keyword>
<keyword id="KW-1185">Reference proteome</keyword>
<keyword id="KW-0812">Transmembrane</keyword>
<keyword id="KW-1133">Transmembrane helix</keyword>
<keyword id="KW-0813">Transport</keyword>
<protein>
    <recommendedName>
        <fullName evidence="5">Glutamate transport system permease protein GluC</fullName>
    </recommendedName>
    <alternativeName>
        <fullName evidence="5">Glutamate uptake system protein GluC</fullName>
    </alternativeName>
</protein>
<accession>P48244</accession>
<evidence type="ECO:0000255" key="1"/>
<evidence type="ECO:0000255" key="2">
    <source>
        <dbReference type="PROSITE-ProRule" id="PRU00441"/>
    </source>
</evidence>
<evidence type="ECO:0000269" key="3">
    <source>
    </source>
</evidence>
<evidence type="ECO:0000303" key="4">
    <source>
    </source>
</evidence>
<evidence type="ECO:0000305" key="5"/>
<evidence type="ECO:0000305" key="6">
    <source>
    </source>
</evidence>
<dbReference type="EMBL" id="X81191">
    <property type="protein sequence ID" value="CAA57062.1"/>
    <property type="molecule type" value="Genomic_DNA"/>
</dbReference>
<dbReference type="EMBL" id="BA000036">
    <property type="protein sequence ID" value="BAB99345.1"/>
    <property type="molecule type" value="Genomic_DNA"/>
</dbReference>
<dbReference type="EMBL" id="BX927153">
    <property type="protein sequence ID" value="CAF20293.1"/>
    <property type="molecule type" value="Genomic_DNA"/>
</dbReference>
<dbReference type="RefSeq" id="NP_601159.1">
    <property type="nucleotide sequence ID" value="NC_003450.3"/>
</dbReference>
<dbReference type="RefSeq" id="WP_011014780.1">
    <property type="nucleotide sequence ID" value="NC_006958.1"/>
</dbReference>
<dbReference type="SMR" id="P48244"/>
<dbReference type="STRING" id="196627.cg2138"/>
<dbReference type="TCDB" id="3.A.1.3.9">
    <property type="family name" value="the atp-binding cassette (abc) superfamily"/>
</dbReference>
<dbReference type="GeneID" id="1019909"/>
<dbReference type="KEGG" id="cgb:cg2138"/>
<dbReference type="KEGG" id="cgl:Cgl1952"/>
<dbReference type="PATRIC" id="fig|196627.13.peg.1890"/>
<dbReference type="eggNOG" id="COG0765">
    <property type="taxonomic scope" value="Bacteria"/>
</dbReference>
<dbReference type="HOGENOM" id="CLU_019602_1_0_11"/>
<dbReference type="OrthoDB" id="3181282at2"/>
<dbReference type="BioCyc" id="CORYNE:G18NG-11544-MONOMER"/>
<dbReference type="Proteomes" id="UP000000582">
    <property type="component" value="Chromosome"/>
</dbReference>
<dbReference type="Proteomes" id="UP000001009">
    <property type="component" value="Chromosome"/>
</dbReference>
<dbReference type="GO" id="GO:0043190">
    <property type="term" value="C:ATP-binding cassette (ABC) transporter complex"/>
    <property type="evidence" value="ECO:0007669"/>
    <property type="project" value="InterPro"/>
</dbReference>
<dbReference type="GO" id="GO:0022857">
    <property type="term" value="F:transmembrane transporter activity"/>
    <property type="evidence" value="ECO:0007669"/>
    <property type="project" value="InterPro"/>
</dbReference>
<dbReference type="GO" id="GO:0006865">
    <property type="term" value="P:amino acid transport"/>
    <property type="evidence" value="ECO:0007669"/>
    <property type="project" value="UniProtKB-KW"/>
</dbReference>
<dbReference type="CDD" id="cd06261">
    <property type="entry name" value="TM_PBP2"/>
    <property type="match status" value="1"/>
</dbReference>
<dbReference type="Gene3D" id="1.10.3720.10">
    <property type="entry name" value="MetI-like"/>
    <property type="match status" value="1"/>
</dbReference>
<dbReference type="InterPro" id="IPR010065">
    <property type="entry name" value="AA_ABC_transptr_permease_3TM"/>
</dbReference>
<dbReference type="InterPro" id="IPR043429">
    <property type="entry name" value="ArtM/GltK/GlnP/TcyL/YhdX-like"/>
</dbReference>
<dbReference type="InterPro" id="IPR000515">
    <property type="entry name" value="MetI-like"/>
</dbReference>
<dbReference type="InterPro" id="IPR035906">
    <property type="entry name" value="MetI-like_sf"/>
</dbReference>
<dbReference type="NCBIfam" id="TIGR01726">
    <property type="entry name" value="HEQRo_perm_3TM"/>
    <property type="match status" value="1"/>
</dbReference>
<dbReference type="PANTHER" id="PTHR30614:SF37">
    <property type="entry name" value="AMINO-ACID ABC TRANSPORTER PERMEASE PROTEIN YHDX-RELATED"/>
    <property type="match status" value="1"/>
</dbReference>
<dbReference type="PANTHER" id="PTHR30614">
    <property type="entry name" value="MEMBRANE COMPONENT OF AMINO ACID ABC TRANSPORTER"/>
    <property type="match status" value="1"/>
</dbReference>
<dbReference type="Pfam" id="PF00528">
    <property type="entry name" value="BPD_transp_1"/>
    <property type="match status" value="1"/>
</dbReference>
<dbReference type="SUPFAM" id="SSF161098">
    <property type="entry name" value="MetI-like"/>
    <property type="match status" value="1"/>
</dbReference>
<dbReference type="PROSITE" id="PS50928">
    <property type="entry name" value="ABC_TM1"/>
    <property type="match status" value="1"/>
</dbReference>
<feature type="chain" id="PRO_0000060041" description="Glutamate transport system permease protein GluC">
    <location>
        <begin position="1"/>
        <end position="228"/>
    </location>
</feature>
<feature type="transmembrane region" description="Helical" evidence="1">
    <location>
        <begin position="16"/>
        <end position="36"/>
    </location>
</feature>
<feature type="transmembrane region" description="Helical" evidence="1">
    <location>
        <begin position="64"/>
        <end position="84"/>
    </location>
</feature>
<feature type="transmembrane region" description="Helical" evidence="1">
    <location>
        <begin position="100"/>
        <end position="120"/>
    </location>
</feature>
<feature type="transmembrane region" description="Helical" evidence="1">
    <location>
        <begin position="145"/>
        <end position="165"/>
    </location>
</feature>
<feature type="transmembrane region" description="Helical" evidence="1">
    <location>
        <begin position="195"/>
        <end position="215"/>
    </location>
</feature>
<feature type="domain" description="ABC transmembrane type-1" evidence="2">
    <location>
        <begin position="16"/>
        <end position="217"/>
    </location>
</feature>
<feature type="sequence conflict" description="In Ref. 1; CAA57062." evidence="5" ref="1">
    <original>LPMGLGLGKLSERLAVKK</original>
    <variation>CLWALAWANSLSVWR</variation>
    <location>
        <begin position="211"/>
        <end position="228"/>
    </location>
</feature>